<accession>Q5M191</accession>
<sequence length="258" mass="30574">MKITKIEKKKRLYLVEIDKKESLYVTEDTIVKYMLTKEMALSKDQLEDIKNFAQFSHGKNLALYFISFKQRTEKEVRDYLFKHEINPHIIPQIIDNLKKDHWIDDYKLLESLAQQNLNSGDKGAYALKQKWLQKGCEKQVIDEVLTQFDFSEVAIKVTSKLLRKYQGKLPTKSLKDKLIQNLINKGFSFQESKNAINQLELEADEENEQALLYKEIEKQYQKFSKKYDGYELKQHLTQSLFRKGYDFDAIASALREYF</sequence>
<feature type="chain" id="PRO_1000065223" description="Regulatory protein RecX">
    <location>
        <begin position="1"/>
        <end position="258"/>
    </location>
</feature>
<organism>
    <name type="scientific">Streptococcus thermophilus (strain CNRZ 1066)</name>
    <dbReference type="NCBI Taxonomy" id="299768"/>
    <lineage>
        <taxon>Bacteria</taxon>
        <taxon>Bacillati</taxon>
        <taxon>Bacillota</taxon>
        <taxon>Bacilli</taxon>
        <taxon>Lactobacillales</taxon>
        <taxon>Streptococcaceae</taxon>
        <taxon>Streptococcus</taxon>
    </lineage>
</organism>
<gene>
    <name evidence="1" type="primary">recX</name>
    <name type="ordered locus">str0375</name>
</gene>
<dbReference type="EMBL" id="CP000024">
    <property type="protein sequence ID" value="AAV61978.1"/>
    <property type="molecule type" value="Genomic_DNA"/>
</dbReference>
<dbReference type="RefSeq" id="WP_002949763.1">
    <property type="nucleotide sequence ID" value="NC_006449.1"/>
</dbReference>
<dbReference type="SMR" id="Q5M191"/>
<dbReference type="GeneID" id="66898300"/>
<dbReference type="KEGG" id="stc:str0375"/>
<dbReference type="HOGENOM" id="CLU_066607_4_0_9"/>
<dbReference type="GO" id="GO:0005737">
    <property type="term" value="C:cytoplasm"/>
    <property type="evidence" value="ECO:0007669"/>
    <property type="project" value="UniProtKB-SubCell"/>
</dbReference>
<dbReference type="GO" id="GO:0006282">
    <property type="term" value="P:regulation of DNA repair"/>
    <property type="evidence" value="ECO:0007669"/>
    <property type="project" value="UniProtKB-UniRule"/>
</dbReference>
<dbReference type="Gene3D" id="1.10.10.10">
    <property type="entry name" value="Winged helix-like DNA-binding domain superfamily/Winged helix DNA-binding domain"/>
    <property type="match status" value="4"/>
</dbReference>
<dbReference type="HAMAP" id="MF_01114">
    <property type="entry name" value="RecX"/>
    <property type="match status" value="1"/>
</dbReference>
<dbReference type="InterPro" id="IPR053926">
    <property type="entry name" value="RecX_HTH_1st"/>
</dbReference>
<dbReference type="InterPro" id="IPR053925">
    <property type="entry name" value="RecX_HTH_3rd"/>
</dbReference>
<dbReference type="InterPro" id="IPR003783">
    <property type="entry name" value="Regulatory_RecX"/>
</dbReference>
<dbReference type="InterPro" id="IPR036388">
    <property type="entry name" value="WH-like_DNA-bd_sf"/>
</dbReference>
<dbReference type="NCBIfam" id="NF010733">
    <property type="entry name" value="PRK14135.1"/>
    <property type="match status" value="1"/>
</dbReference>
<dbReference type="PANTHER" id="PTHR33602">
    <property type="entry name" value="REGULATORY PROTEIN RECX FAMILY PROTEIN"/>
    <property type="match status" value="1"/>
</dbReference>
<dbReference type="PANTHER" id="PTHR33602:SF1">
    <property type="entry name" value="REGULATORY PROTEIN RECX FAMILY PROTEIN"/>
    <property type="match status" value="1"/>
</dbReference>
<dbReference type="Pfam" id="PF21982">
    <property type="entry name" value="RecX_HTH1"/>
    <property type="match status" value="1"/>
</dbReference>
<dbReference type="Pfam" id="PF21981">
    <property type="entry name" value="RecX_HTH3"/>
    <property type="match status" value="1"/>
</dbReference>
<reference key="1">
    <citation type="journal article" date="2004" name="Nat. Biotechnol.">
        <title>Complete sequence and comparative genome analysis of the dairy bacterium Streptococcus thermophilus.</title>
        <authorList>
            <person name="Bolotin A."/>
            <person name="Quinquis B."/>
            <person name="Renault P."/>
            <person name="Sorokin A."/>
            <person name="Ehrlich S.D."/>
            <person name="Kulakauskas S."/>
            <person name="Lapidus A."/>
            <person name="Goltsman E."/>
            <person name="Mazur M."/>
            <person name="Pusch G.D."/>
            <person name="Fonstein M."/>
            <person name="Overbeek R."/>
            <person name="Kyprides N."/>
            <person name="Purnelle B."/>
            <person name="Prozzi D."/>
            <person name="Ngui K."/>
            <person name="Masuy D."/>
            <person name="Hancy F."/>
            <person name="Burteau S."/>
            <person name="Boutry M."/>
            <person name="Delcour J."/>
            <person name="Goffeau A."/>
            <person name="Hols P."/>
        </authorList>
    </citation>
    <scope>NUCLEOTIDE SEQUENCE [LARGE SCALE GENOMIC DNA]</scope>
    <source>
        <strain>CNRZ 1066</strain>
    </source>
</reference>
<keyword id="KW-0963">Cytoplasm</keyword>
<comment type="function">
    <text evidence="1">Modulates RecA activity.</text>
</comment>
<comment type="subcellular location">
    <subcellularLocation>
        <location evidence="1">Cytoplasm</location>
    </subcellularLocation>
</comment>
<comment type="similarity">
    <text evidence="1">Belongs to the RecX family.</text>
</comment>
<proteinExistence type="inferred from homology"/>
<name>RECX_STRT1</name>
<protein>
    <recommendedName>
        <fullName evidence="1">Regulatory protein RecX</fullName>
    </recommendedName>
</protein>
<evidence type="ECO:0000255" key="1">
    <source>
        <dbReference type="HAMAP-Rule" id="MF_01114"/>
    </source>
</evidence>